<evidence type="ECO:0000255" key="1">
    <source>
        <dbReference type="HAMAP-Rule" id="MF_01374"/>
    </source>
</evidence>
<keyword id="KW-0378">Hydrolase</keyword>
<keyword id="KW-0479">Metal-binding</keyword>
<keyword id="KW-0862">Zinc</keyword>
<comment type="function">
    <text evidence="1">Thiolesterase that catalyzes the hydrolysis of S-D-lactoyl-glutathione to form glutathione and D-lactic acid.</text>
</comment>
<comment type="catalytic activity">
    <reaction evidence="1">
        <text>an S-(2-hydroxyacyl)glutathione + H2O = a 2-hydroxy carboxylate + glutathione + H(+)</text>
        <dbReference type="Rhea" id="RHEA:21864"/>
        <dbReference type="ChEBI" id="CHEBI:15377"/>
        <dbReference type="ChEBI" id="CHEBI:15378"/>
        <dbReference type="ChEBI" id="CHEBI:57925"/>
        <dbReference type="ChEBI" id="CHEBI:58896"/>
        <dbReference type="ChEBI" id="CHEBI:71261"/>
        <dbReference type="EC" id="3.1.2.6"/>
    </reaction>
</comment>
<comment type="cofactor">
    <cofactor evidence="1">
        <name>Zn(2+)</name>
        <dbReference type="ChEBI" id="CHEBI:29105"/>
    </cofactor>
    <text evidence="1">Binds 2 Zn(2+) ions per subunit.</text>
</comment>
<comment type="pathway">
    <text evidence="1">Secondary metabolite metabolism; methylglyoxal degradation; (R)-lactate from methylglyoxal: step 2/2.</text>
</comment>
<comment type="subunit">
    <text evidence="1">Monomer.</text>
</comment>
<comment type="similarity">
    <text evidence="1">Belongs to the metallo-beta-lactamase superfamily. Glyoxalase II family.</text>
</comment>
<sequence>MAAEIRLFTCLNDNFGYLIHDPATGATASVDAPEAAPIIAALAREGWTLTDILVTHHHGDHVGGVAELKQKYRCRVVAPHDRNGRIPEVDLRVAQGDVVKVGGLLARVLETPGHTLDHLAYVFDDDKAVFAGDTLFSIGCGRVFEGTYPMMWDSLLKLRVLPDDMRLYCGHEYTAANVKFALGVEPDNPALQARAAQVTALRAAGQPTIPTLLGEEKAANVFLRADEPSVAASVRLKGADPVAVFTELRERKNKS</sequence>
<protein>
    <recommendedName>
        <fullName evidence="1">Hydroxyacylglutathione hydrolase</fullName>
        <ecNumber evidence="1">3.1.2.6</ecNumber>
    </recommendedName>
    <alternativeName>
        <fullName evidence="1">Glyoxalase II</fullName>
        <shortName evidence="1">Glx II</shortName>
    </alternativeName>
</protein>
<name>GLO2_RHOP5</name>
<dbReference type="EC" id="3.1.2.6" evidence="1"/>
<dbReference type="EMBL" id="CP000463">
    <property type="protein sequence ID" value="ABJ04125.1"/>
    <property type="molecule type" value="Genomic_DNA"/>
</dbReference>
<dbReference type="SMR" id="Q07VA9"/>
<dbReference type="STRING" id="316055.RPE_0164"/>
<dbReference type="KEGG" id="rpe:RPE_0164"/>
<dbReference type="eggNOG" id="COG0491">
    <property type="taxonomic scope" value="Bacteria"/>
</dbReference>
<dbReference type="HOGENOM" id="CLU_030571_4_1_5"/>
<dbReference type="OrthoDB" id="9802248at2"/>
<dbReference type="UniPathway" id="UPA00619">
    <property type="reaction ID" value="UER00676"/>
</dbReference>
<dbReference type="GO" id="GO:0004416">
    <property type="term" value="F:hydroxyacylglutathione hydrolase activity"/>
    <property type="evidence" value="ECO:0007669"/>
    <property type="project" value="UniProtKB-UniRule"/>
</dbReference>
<dbReference type="GO" id="GO:0046872">
    <property type="term" value="F:metal ion binding"/>
    <property type="evidence" value="ECO:0007669"/>
    <property type="project" value="UniProtKB-KW"/>
</dbReference>
<dbReference type="GO" id="GO:0019243">
    <property type="term" value="P:methylglyoxal catabolic process to D-lactate via S-lactoyl-glutathione"/>
    <property type="evidence" value="ECO:0007669"/>
    <property type="project" value="InterPro"/>
</dbReference>
<dbReference type="CDD" id="cd07723">
    <property type="entry name" value="hydroxyacylglutathione_hydrolase_MBL-fold"/>
    <property type="match status" value="1"/>
</dbReference>
<dbReference type="Gene3D" id="3.60.15.10">
    <property type="entry name" value="Ribonuclease Z/Hydroxyacylglutathione hydrolase-like"/>
    <property type="match status" value="1"/>
</dbReference>
<dbReference type="HAMAP" id="MF_01374">
    <property type="entry name" value="Glyoxalase_2"/>
    <property type="match status" value="1"/>
</dbReference>
<dbReference type="InterPro" id="IPR035680">
    <property type="entry name" value="Clx_II_MBL"/>
</dbReference>
<dbReference type="InterPro" id="IPR050110">
    <property type="entry name" value="Glyoxalase_II_hydrolase"/>
</dbReference>
<dbReference type="InterPro" id="IPR032282">
    <property type="entry name" value="HAGH_C"/>
</dbReference>
<dbReference type="InterPro" id="IPR017782">
    <property type="entry name" value="Hydroxyacylglutathione_Hdrlase"/>
</dbReference>
<dbReference type="InterPro" id="IPR001279">
    <property type="entry name" value="Metallo-B-lactamas"/>
</dbReference>
<dbReference type="InterPro" id="IPR036866">
    <property type="entry name" value="RibonucZ/Hydroxyglut_hydro"/>
</dbReference>
<dbReference type="NCBIfam" id="TIGR03413">
    <property type="entry name" value="GSH_gloB"/>
    <property type="match status" value="1"/>
</dbReference>
<dbReference type="PANTHER" id="PTHR43705">
    <property type="entry name" value="HYDROXYACYLGLUTATHIONE HYDROLASE"/>
    <property type="match status" value="1"/>
</dbReference>
<dbReference type="PANTHER" id="PTHR43705:SF1">
    <property type="entry name" value="HYDROXYACYLGLUTATHIONE HYDROLASE GLOB"/>
    <property type="match status" value="1"/>
</dbReference>
<dbReference type="Pfam" id="PF16123">
    <property type="entry name" value="HAGH_C"/>
    <property type="match status" value="1"/>
</dbReference>
<dbReference type="Pfam" id="PF00753">
    <property type="entry name" value="Lactamase_B"/>
    <property type="match status" value="1"/>
</dbReference>
<dbReference type="PIRSF" id="PIRSF005457">
    <property type="entry name" value="Glx"/>
    <property type="match status" value="1"/>
</dbReference>
<dbReference type="SMART" id="SM00849">
    <property type="entry name" value="Lactamase_B"/>
    <property type="match status" value="1"/>
</dbReference>
<dbReference type="SUPFAM" id="SSF56281">
    <property type="entry name" value="Metallo-hydrolase/oxidoreductase"/>
    <property type="match status" value="1"/>
</dbReference>
<proteinExistence type="inferred from homology"/>
<accession>Q07VA9</accession>
<gene>
    <name evidence="1" type="primary">gloB</name>
    <name type="ordered locus">RPE_0164</name>
</gene>
<reference key="1">
    <citation type="submission" date="2006-09" db="EMBL/GenBank/DDBJ databases">
        <title>Complete sequence of Rhodopseudomonas palustris BisA53.</title>
        <authorList>
            <consortium name="US DOE Joint Genome Institute"/>
            <person name="Copeland A."/>
            <person name="Lucas S."/>
            <person name="Lapidus A."/>
            <person name="Barry K."/>
            <person name="Detter J.C."/>
            <person name="Glavina del Rio T."/>
            <person name="Hammon N."/>
            <person name="Israni S."/>
            <person name="Dalin E."/>
            <person name="Tice H."/>
            <person name="Pitluck S."/>
            <person name="Chain P."/>
            <person name="Malfatti S."/>
            <person name="Shin M."/>
            <person name="Vergez L."/>
            <person name="Schmutz J."/>
            <person name="Larimer F."/>
            <person name="Land M."/>
            <person name="Hauser L."/>
            <person name="Pelletier D.A."/>
            <person name="Kyrpides N."/>
            <person name="Kim E."/>
            <person name="Harwood C.S."/>
            <person name="Oda Y."/>
            <person name="Richardson P."/>
        </authorList>
    </citation>
    <scope>NUCLEOTIDE SEQUENCE [LARGE SCALE GENOMIC DNA]</scope>
    <source>
        <strain>BisA53</strain>
    </source>
</reference>
<organism>
    <name type="scientific">Rhodopseudomonas palustris (strain BisA53)</name>
    <dbReference type="NCBI Taxonomy" id="316055"/>
    <lineage>
        <taxon>Bacteria</taxon>
        <taxon>Pseudomonadati</taxon>
        <taxon>Pseudomonadota</taxon>
        <taxon>Alphaproteobacteria</taxon>
        <taxon>Hyphomicrobiales</taxon>
        <taxon>Nitrobacteraceae</taxon>
        <taxon>Rhodopseudomonas</taxon>
    </lineage>
</organism>
<feature type="chain" id="PRO_0000309694" description="Hydroxyacylglutathione hydrolase">
    <location>
        <begin position="1"/>
        <end position="255"/>
    </location>
</feature>
<feature type="binding site" evidence="1">
    <location>
        <position position="56"/>
    </location>
    <ligand>
        <name>Zn(2+)</name>
        <dbReference type="ChEBI" id="CHEBI:29105"/>
        <label>1</label>
    </ligand>
</feature>
<feature type="binding site" evidence="1">
    <location>
        <position position="58"/>
    </location>
    <ligand>
        <name>Zn(2+)</name>
        <dbReference type="ChEBI" id="CHEBI:29105"/>
        <label>1</label>
    </ligand>
</feature>
<feature type="binding site" evidence="1">
    <location>
        <position position="60"/>
    </location>
    <ligand>
        <name>Zn(2+)</name>
        <dbReference type="ChEBI" id="CHEBI:29105"/>
        <label>2</label>
    </ligand>
</feature>
<feature type="binding site" evidence="1">
    <location>
        <position position="61"/>
    </location>
    <ligand>
        <name>Zn(2+)</name>
        <dbReference type="ChEBI" id="CHEBI:29105"/>
        <label>2</label>
    </ligand>
</feature>
<feature type="binding site" evidence="1">
    <location>
        <position position="114"/>
    </location>
    <ligand>
        <name>Zn(2+)</name>
        <dbReference type="ChEBI" id="CHEBI:29105"/>
        <label>1</label>
    </ligand>
</feature>
<feature type="binding site" evidence="1">
    <location>
        <position position="133"/>
    </location>
    <ligand>
        <name>Zn(2+)</name>
        <dbReference type="ChEBI" id="CHEBI:29105"/>
        <label>1</label>
    </ligand>
</feature>
<feature type="binding site" evidence="1">
    <location>
        <position position="133"/>
    </location>
    <ligand>
        <name>Zn(2+)</name>
        <dbReference type="ChEBI" id="CHEBI:29105"/>
        <label>2</label>
    </ligand>
</feature>
<feature type="binding site" evidence="1">
    <location>
        <position position="171"/>
    </location>
    <ligand>
        <name>Zn(2+)</name>
        <dbReference type="ChEBI" id="CHEBI:29105"/>
        <label>2</label>
    </ligand>
</feature>